<reference key="1">
    <citation type="submission" date="2008-10" db="EMBL/GenBank/DDBJ databases">
        <title>Genome sequence of Clostridium botulinum A2 Kyoto.</title>
        <authorList>
            <person name="Shrivastava S."/>
            <person name="Brinkac L.M."/>
            <person name="Brown J.L."/>
            <person name="Bruce D."/>
            <person name="Detter C.C."/>
            <person name="Johnson E.A."/>
            <person name="Munk C.A."/>
            <person name="Smith L.A."/>
            <person name="Smith T.J."/>
            <person name="Sutton G."/>
            <person name="Brettin T.S."/>
        </authorList>
    </citation>
    <scope>NUCLEOTIDE SEQUENCE [LARGE SCALE GENOMIC DNA]</scope>
    <source>
        <strain>Kyoto / Type A2</strain>
    </source>
</reference>
<protein>
    <recommendedName>
        <fullName evidence="1">5'-nucleotidase SurE</fullName>
        <ecNumber evidence="1">3.1.3.5</ecNumber>
    </recommendedName>
    <alternativeName>
        <fullName evidence="1">Nucleoside 5'-monophosphate phosphohydrolase</fullName>
    </alternativeName>
</protein>
<feature type="chain" id="PRO_1000196588" description="5'-nucleotidase SurE">
    <location>
        <begin position="1"/>
        <end position="252"/>
    </location>
</feature>
<feature type="binding site" evidence="1">
    <location>
        <position position="8"/>
    </location>
    <ligand>
        <name>a divalent metal cation</name>
        <dbReference type="ChEBI" id="CHEBI:60240"/>
    </ligand>
</feature>
<feature type="binding site" evidence="1">
    <location>
        <position position="9"/>
    </location>
    <ligand>
        <name>a divalent metal cation</name>
        <dbReference type="ChEBI" id="CHEBI:60240"/>
    </ligand>
</feature>
<feature type="binding site" evidence="1">
    <location>
        <position position="39"/>
    </location>
    <ligand>
        <name>a divalent metal cation</name>
        <dbReference type="ChEBI" id="CHEBI:60240"/>
    </ligand>
</feature>
<feature type="binding site" evidence="1">
    <location>
        <position position="95"/>
    </location>
    <ligand>
        <name>a divalent metal cation</name>
        <dbReference type="ChEBI" id="CHEBI:60240"/>
    </ligand>
</feature>
<gene>
    <name evidence="1" type="primary">surE</name>
    <name type="ordered locus">CLM_0283</name>
</gene>
<dbReference type="EC" id="3.1.3.5" evidence="1"/>
<dbReference type="EMBL" id="CP001581">
    <property type="protein sequence ID" value="ACO83619.1"/>
    <property type="molecule type" value="Genomic_DNA"/>
</dbReference>
<dbReference type="RefSeq" id="WP_003355816.1">
    <property type="nucleotide sequence ID" value="NC_012563.1"/>
</dbReference>
<dbReference type="SMR" id="C1FQW9"/>
<dbReference type="KEGG" id="cby:CLM_0283"/>
<dbReference type="eggNOG" id="COG0496">
    <property type="taxonomic scope" value="Bacteria"/>
</dbReference>
<dbReference type="HOGENOM" id="CLU_045192_1_3_9"/>
<dbReference type="Proteomes" id="UP000001374">
    <property type="component" value="Chromosome"/>
</dbReference>
<dbReference type="GO" id="GO:0005737">
    <property type="term" value="C:cytoplasm"/>
    <property type="evidence" value="ECO:0007669"/>
    <property type="project" value="UniProtKB-SubCell"/>
</dbReference>
<dbReference type="GO" id="GO:0008254">
    <property type="term" value="F:3'-nucleotidase activity"/>
    <property type="evidence" value="ECO:0007669"/>
    <property type="project" value="TreeGrafter"/>
</dbReference>
<dbReference type="GO" id="GO:0008253">
    <property type="term" value="F:5'-nucleotidase activity"/>
    <property type="evidence" value="ECO:0007669"/>
    <property type="project" value="UniProtKB-UniRule"/>
</dbReference>
<dbReference type="GO" id="GO:0004309">
    <property type="term" value="F:exopolyphosphatase activity"/>
    <property type="evidence" value="ECO:0007669"/>
    <property type="project" value="TreeGrafter"/>
</dbReference>
<dbReference type="GO" id="GO:0046872">
    <property type="term" value="F:metal ion binding"/>
    <property type="evidence" value="ECO:0007669"/>
    <property type="project" value="UniProtKB-UniRule"/>
</dbReference>
<dbReference type="GO" id="GO:0000166">
    <property type="term" value="F:nucleotide binding"/>
    <property type="evidence" value="ECO:0007669"/>
    <property type="project" value="UniProtKB-KW"/>
</dbReference>
<dbReference type="FunFam" id="3.40.1210.10:FF:000001">
    <property type="entry name" value="5'/3'-nucleotidase SurE"/>
    <property type="match status" value="1"/>
</dbReference>
<dbReference type="Gene3D" id="3.40.1210.10">
    <property type="entry name" value="Survival protein SurE-like phosphatase/nucleotidase"/>
    <property type="match status" value="1"/>
</dbReference>
<dbReference type="HAMAP" id="MF_00060">
    <property type="entry name" value="SurE"/>
    <property type="match status" value="1"/>
</dbReference>
<dbReference type="InterPro" id="IPR030048">
    <property type="entry name" value="SurE"/>
</dbReference>
<dbReference type="InterPro" id="IPR002828">
    <property type="entry name" value="SurE-like_Pase/nucleotidase"/>
</dbReference>
<dbReference type="InterPro" id="IPR036523">
    <property type="entry name" value="SurE-like_sf"/>
</dbReference>
<dbReference type="NCBIfam" id="NF001490">
    <property type="entry name" value="PRK00346.1-4"/>
    <property type="match status" value="1"/>
</dbReference>
<dbReference type="NCBIfam" id="NF010543">
    <property type="entry name" value="PRK13933.1"/>
    <property type="match status" value="1"/>
</dbReference>
<dbReference type="NCBIfam" id="TIGR00087">
    <property type="entry name" value="surE"/>
    <property type="match status" value="1"/>
</dbReference>
<dbReference type="PANTHER" id="PTHR30457">
    <property type="entry name" value="5'-NUCLEOTIDASE SURE"/>
    <property type="match status" value="1"/>
</dbReference>
<dbReference type="PANTHER" id="PTHR30457:SF12">
    <property type="entry name" value="5'_3'-NUCLEOTIDASE SURE"/>
    <property type="match status" value="1"/>
</dbReference>
<dbReference type="Pfam" id="PF01975">
    <property type="entry name" value="SurE"/>
    <property type="match status" value="1"/>
</dbReference>
<dbReference type="SUPFAM" id="SSF64167">
    <property type="entry name" value="SurE-like"/>
    <property type="match status" value="1"/>
</dbReference>
<proteinExistence type="inferred from homology"/>
<name>SURE_CLOBJ</name>
<accession>C1FQW9</accession>
<evidence type="ECO:0000255" key="1">
    <source>
        <dbReference type="HAMAP-Rule" id="MF_00060"/>
    </source>
</evidence>
<sequence>MNILLTNDDGIEAEGINTLAELLSKYHDVTMVAPENQRSASSHSITIYEPIIVKQVKKPYNIEAYSISGTPADCVRVALDKLVPDNIDMVISGINKGLNIGNDILYSGTVSAAIEGAMYKVPSMAVSAQFIKNKKENYKIAAKYALGMLNRLKKEDLKNDVVLNLNIPFCSEEEIKGIKVCKVGNKIFNTRFSEEIDEEGNKVLKLEGDINKDIYEGTDVYYIRNKYVTLTPLHYDLTNFNILEETEQLFLS</sequence>
<comment type="function">
    <text evidence="1">Nucleotidase that shows phosphatase activity on nucleoside 5'-monophosphates.</text>
</comment>
<comment type="catalytic activity">
    <reaction evidence="1">
        <text>a ribonucleoside 5'-phosphate + H2O = a ribonucleoside + phosphate</text>
        <dbReference type="Rhea" id="RHEA:12484"/>
        <dbReference type="ChEBI" id="CHEBI:15377"/>
        <dbReference type="ChEBI" id="CHEBI:18254"/>
        <dbReference type="ChEBI" id="CHEBI:43474"/>
        <dbReference type="ChEBI" id="CHEBI:58043"/>
        <dbReference type="EC" id="3.1.3.5"/>
    </reaction>
</comment>
<comment type="cofactor">
    <cofactor evidence="1">
        <name>a divalent metal cation</name>
        <dbReference type="ChEBI" id="CHEBI:60240"/>
    </cofactor>
    <text evidence="1">Binds 1 divalent metal cation per subunit.</text>
</comment>
<comment type="subcellular location">
    <subcellularLocation>
        <location evidence="1">Cytoplasm</location>
    </subcellularLocation>
</comment>
<comment type="similarity">
    <text evidence="1">Belongs to the SurE nucleotidase family.</text>
</comment>
<organism>
    <name type="scientific">Clostridium botulinum (strain Kyoto / Type A2)</name>
    <dbReference type="NCBI Taxonomy" id="536232"/>
    <lineage>
        <taxon>Bacteria</taxon>
        <taxon>Bacillati</taxon>
        <taxon>Bacillota</taxon>
        <taxon>Clostridia</taxon>
        <taxon>Eubacteriales</taxon>
        <taxon>Clostridiaceae</taxon>
        <taxon>Clostridium</taxon>
    </lineage>
</organism>
<keyword id="KW-0963">Cytoplasm</keyword>
<keyword id="KW-0378">Hydrolase</keyword>
<keyword id="KW-0479">Metal-binding</keyword>
<keyword id="KW-0547">Nucleotide-binding</keyword>